<sequence>MSSAICPCGSGDLLLACCGRYHAGQPAPCAEKLMRSRYSAYVLGLTDYLVQTTLPVQQSGLNREAIAQWSAQSTWLGLEVESSEVFGGKPEHAFVTFTARWHDGNGEHSHKERSSFVQNQGRWYFIDSTVPLKAGRNDACPCGSEQKFKKCCSPYVV</sequence>
<reference key="1">
    <citation type="journal article" date="2005" name="J. Bacteriol.">
        <title>Whole-genome sequence analysis of Pseudomonas syringae pv. phaseolicola 1448A reveals divergence among pathovars in genes involved in virulence and transposition.</title>
        <authorList>
            <person name="Joardar V."/>
            <person name="Lindeberg M."/>
            <person name="Jackson R.W."/>
            <person name="Selengut J."/>
            <person name="Dodson R."/>
            <person name="Brinkac L.M."/>
            <person name="Daugherty S.C."/>
            <person name="DeBoy R.T."/>
            <person name="Durkin A.S."/>
            <person name="Gwinn Giglio M."/>
            <person name="Madupu R."/>
            <person name="Nelson W.C."/>
            <person name="Rosovitz M.J."/>
            <person name="Sullivan S.A."/>
            <person name="Crabtree J."/>
            <person name="Creasy T."/>
            <person name="Davidsen T.M."/>
            <person name="Haft D.H."/>
            <person name="Zafar N."/>
            <person name="Zhou L."/>
            <person name="Halpin R."/>
            <person name="Holley T."/>
            <person name="Khouri H.M."/>
            <person name="Feldblyum T.V."/>
            <person name="White O."/>
            <person name="Fraser C.M."/>
            <person name="Chatterjee A.K."/>
            <person name="Cartinhour S."/>
            <person name="Schneider D."/>
            <person name="Mansfield J.W."/>
            <person name="Collmer A."/>
            <person name="Buell R."/>
        </authorList>
    </citation>
    <scope>NUCLEOTIDE SEQUENCE [LARGE SCALE GENOMIC DNA]</scope>
    <source>
        <strain>1448A / Race 6</strain>
    </source>
</reference>
<name>Y1399_PSE14</name>
<accession>Q48LR7</accession>
<organism>
    <name type="scientific">Pseudomonas savastanoi pv. phaseolicola (strain 1448A / Race 6)</name>
    <name type="common">Pseudomonas syringae pv. phaseolicola (strain 1448A / Race 6)</name>
    <dbReference type="NCBI Taxonomy" id="264730"/>
    <lineage>
        <taxon>Bacteria</taxon>
        <taxon>Pseudomonadati</taxon>
        <taxon>Pseudomonadota</taxon>
        <taxon>Gammaproteobacteria</taxon>
        <taxon>Pseudomonadales</taxon>
        <taxon>Pseudomonadaceae</taxon>
        <taxon>Pseudomonas</taxon>
    </lineage>
</organism>
<proteinExistence type="inferred from homology"/>
<protein>
    <recommendedName>
        <fullName evidence="1">UPF0225 protein PSPPH_1399</fullName>
    </recommendedName>
</protein>
<evidence type="ECO:0000255" key="1">
    <source>
        <dbReference type="HAMAP-Rule" id="MF_00612"/>
    </source>
</evidence>
<dbReference type="EMBL" id="CP000058">
    <property type="protein sequence ID" value="AAZ33961.1"/>
    <property type="molecule type" value="Genomic_DNA"/>
</dbReference>
<dbReference type="RefSeq" id="WP_004664098.1">
    <property type="nucleotide sequence ID" value="NC_005773.3"/>
</dbReference>
<dbReference type="SMR" id="Q48LR7"/>
<dbReference type="KEGG" id="psp:PSPPH_1399"/>
<dbReference type="eggNOG" id="COG3012">
    <property type="taxonomic scope" value="Bacteria"/>
</dbReference>
<dbReference type="HOGENOM" id="CLU_099590_0_1_6"/>
<dbReference type="Proteomes" id="UP000000551">
    <property type="component" value="Chromosome"/>
</dbReference>
<dbReference type="Gene3D" id="3.10.450.50">
    <property type="match status" value="1"/>
</dbReference>
<dbReference type="HAMAP" id="MF_00612">
    <property type="entry name" value="UPF0225"/>
    <property type="match status" value="1"/>
</dbReference>
<dbReference type="InterPro" id="IPR032710">
    <property type="entry name" value="NTF2-like_dom_sf"/>
</dbReference>
<dbReference type="InterPro" id="IPR004027">
    <property type="entry name" value="SEC_C_motif"/>
</dbReference>
<dbReference type="InterPro" id="IPR023006">
    <property type="entry name" value="UPF0225"/>
</dbReference>
<dbReference type="InterPro" id="IPR048469">
    <property type="entry name" value="YchJ-like_M"/>
</dbReference>
<dbReference type="NCBIfam" id="NF001213">
    <property type="entry name" value="PRK00183.1"/>
    <property type="match status" value="1"/>
</dbReference>
<dbReference type="NCBIfam" id="NF002449">
    <property type="entry name" value="PRK01617.1"/>
    <property type="match status" value="1"/>
</dbReference>
<dbReference type="NCBIfam" id="NF002486">
    <property type="entry name" value="PRK01752.1"/>
    <property type="match status" value="1"/>
</dbReference>
<dbReference type="PANTHER" id="PTHR33747:SF1">
    <property type="entry name" value="ADENYLATE CYCLASE-ASSOCIATED CAP C-TERMINAL DOMAIN-CONTAINING PROTEIN"/>
    <property type="match status" value="1"/>
</dbReference>
<dbReference type="PANTHER" id="PTHR33747">
    <property type="entry name" value="UPF0225 PROTEIN SCO1677"/>
    <property type="match status" value="1"/>
</dbReference>
<dbReference type="Pfam" id="PF02810">
    <property type="entry name" value="SEC-C"/>
    <property type="match status" value="1"/>
</dbReference>
<dbReference type="Pfam" id="PF17775">
    <property type="entry name" value="YchJ_M-like"/>
    <property type="match status" value="1"/>
</dbReference>
<dbReference type="SUPFAM" id="SSF54427">
    <property type="entry name" value="NTF2-like"/>
    <property type="match status" value="1"/>
</dbReference>
<dbReference type="SUPFAM" id="SSF103642">
    <property type="entry name" value="Sec-C motif"/>
    <property type="match status" value="1"/>
</dbReference>
<comment type="similarity">
    <text evidence="1">Belongs to the UPF0225 family.</text>
</comment>
<feature type="chain" id="PRO_1000056731" description="UPF0225 protein PSPPH_1399">
    <location>
        <begin position="1"/>
        <end position="157"/>
    </location>
</feature>
<gene>
    <name type="ordered locus">PSPPH_1399</name>
</gene>